<gene>
    <name type="primary">MBP2</name>
</gene>
<name>EMBP2_CAVPO</name>
<reference key="1">
    <citation type="journal article" date="1991" name="FEBS Lett.">
        <title>Comparison of the amino acid and nucleotide sequences between human and two guinea pig major basic proteins.</title>
        <authorList>
            <person name="Aoki I."/>
            <person name="Shindoh Y."/>
            <person name="Nishida T."/>
            <person name="Nakai S."/>
            <person name="Hong Y.-M."/>
            <person name="Mio M."/>
            <person name="Saito T."/>
            <person name="Tasaka K."/>
        </authorList>
    </citation>
    <scope>NUCLEOTIDE SEQUENCE [MRNA]</scope>
    <scope>PARTIAL PROTEIN SEQUENCE</scope>
    <source>
        <tissue>Eosinophil</tissue>
    </source>
</reference>
<comment type="function">
    <text>MBP may play some important roles in the allergic reactions and inflammations, since MBP is capable of releasing histamine from mast cells and damaging the epithelial cells of bronchial tubes. Antiparasitic and antibiotic.</text>
</comment>
<comment type="subcellular location">
    <subcellularLocation>
        <location>Cytoplasmic granule</location>
    </subcellularLocation>
    <text>Matrix of eosinophil's large specific granule (crystalloid core).</text>
</comment>
<comment type="PTM">
    <text evidence="1">Nitrated.</text>
</comment>
<evidence type="ECO:0000250" key="1"/>
<evidence type="ECO:0000255" key="2"/>
<evidence type="ECO:0000255" key="3">
    <source>
        <dbReference type="PROSITE-ProRule" id="PRU00040"/>
    </source>
</evidence>
<evidence type="ECO:0000256" key="4">
    <source>
        <dbReference type="SAM" id="MobiDB-lite"/>
    </source>
</evidence>
<feature type="signal peptide" evidence="2">
    <location>
        <begin position="1"/>
        <end position="15"/>
    </location>
</feature>
<feature type="propeptide" id="PRO_0000017381" description="Acidic">
    <location>
        <begin position="16"/>
        <end position="115"/>
    </location>
</feature>
<feature type="chain" id="PRO_0000017382" description="Eosinophil granule major basic protein 2">
    <location>
        <begin position="116"/>
        <end position="234"/>
    </location>
</feature>
<feature type="domain" description="C-type lectin" evidence="3">
    <location>
        <begin position="133"/>
        <end position="234"/>
    </location>
</feature>
<feature type="region of interest" description="Disordered" evidence="4">
    <location>
        <begin position="26"/>
        <end position="96"/>
    </location>
</feature>
<feature type="compositionally biased region" description="Acidic residues" evidence="4">
    <location>
        <begin position="71"/>
        <end position="94"/>
    </location>
</feature>
<feature type="glycosylation site" description="O-linked (Xyl...) (glycosaminoglycan) serine" evidence="1">
    <location>
        <position position="69"/>
    </location>
</feature>
<feature type="disulfide bond" evidence="3">
    <location>
        <begin position="135"/>
        <end position="232"/>
    </location>
</feature>
<feature type="disulfide bond" evidence="3">
    <location>
        <begin position="209"/>
        <end position="224"/>
    </location>
</feature>
<accession>P35709</accession>
<proteinExistence type="evidence at protein level"/>
<sequence>MKLLLLLALLVGAVSTRHLNVDTSSLQSLQGEESLAQDGETAEGATREAASGVLMPLREEVKEEMEGGSGSEDDPEEEEEEKEMESSSELDMGPEDVQCPKEEDIVKFEGSPGCKICRYVVLSVPKTFKQAQSVCQRCFRGNLASIHSYNINLQVQRSSRILNVAQVWIGGQLRGKGHHKHFHWVDGTLWNFWYWAAGQPWRGNNSGRCVTLCARGGHWRRSHCGVRRAFSCSY</sequence>
<keyword id="KW-0044">Antibiotic</keyword>
<keyword id="KW-0929">Antimicrobial</keyword>
<keyword id="KW-0903">Direct protein sequencing</keyword>
<keyword id="KW-1015">Disulfide bond</keyword>
<keyword id="KW-0325">Glycoprotein</keyword>
<keyword id="KW-0391">Immunity</keyword>
<keyword id="KW-0430">Lectin</keyword>
<keyword id="KW-0944">Nitration</keyword>
<keyword id="KW-0654">Proteoglycan</keyword>
<keyword id="KW-1185">Reference proteome</keyword>
<keyword id="KW-0732">Signal</keyword>
<protein>
    <recommendedName>
        <fullName>Eosinophil granule major basic protein 2</fullName>
        <shortName>MBP-2</shortName>
    </recommendedName>
</protein>
<dbReference type="EMBL" id="D00817">
    <property type="protein sequence ID" value="BAA00697.1"/>
    <property type="molecule type" value="mRNA"/>
</dbReference>
<dbReference type="PIR" id="S15102">
    <property type="entry name" value="S15102"/>
</dbReference>
<dbReference type="RefSeq" id="NP_001166350.1">
    <property type="nucleotide sequence ID" value="NM_001172879.1"/>
</dbReference>
<dbReference type="SMR" id="P35709"/>
<dbReference type="FunCoup" id="P35709">
    <property type="interactions" value="102"/>
</dbReference>
<dbReference type="STRING" id="10141.ENSCPOP00000015284"/>
<dbReference type="MEROPS" id="I63.001"/>
<dbReference type="GlyCosmos" id="P35709">
    <property type="glycosylation" value="1 site, No reported glycans"/>
</dbReference>
<dbReference type="GeneID" id="100379574"/>
<dbReference type="KEGG" id="cpoc:100379574"/>
<dbReference type="CTD" id="100379574"/>
<dbReference type="eggNOG" id="KOG4297">
    <property type="taxonomic scope" value="Eukaryota"/>
</dbReference>
<dbReference type="InParanoid" id="P35709"/>
<dbReference type="OrthoDB" id="6369810at2759"/>
<dbReference type="Proteomes" id="UP000005447">
    <property type="component" value="Unassembled WGS sequence"/>
</dbReference>
<dbReference type="GO" id="GO:0030246">
    <property type="term" value="F:carbohydrate binding"/>
    <property type="evidence" value="ECO:0007669"/>
    <property type="project" value="UniProtKB-KW"/>
</dbReference>
<dbReference type="GO" id="GO:0042742">
    <property type="term" value="P:defense response to bacterium"/>
    <property type="evidence" value="ECO:0007669"/>
    <property type="project" value="UniProtKB-KW"/>
</dbReference>
<dbReference type="GO" id="GO:0006955">
    <property type="term" value="P:immune response"/>
    <property type="evidence" value="ECO:0007669"/>
    <property type="project" value="InterPro"/>
</dbReference>
<dbReference type="CDD" id="cd03598">
    <property type="entry name" value="CLECT_EMBP_like"/>
    <property type="match status" value="1"/>
</dbReference>
<dbReference type="Gene3D" id="3.10.100.10">
    <property type="entry name" value="Mannose-Binding Protein A, subunit A"/>
    <property type="match status" value="1"/>
</dbReference>
<dbReference type="InterPro" id="IPR001304">
    <property type="entry name" value="C-type_lectin-like"/>
</dbReference>
<dbReference type="InterPro" id="IPR016186">
    <property type="entry name" value="C-type_lectin-like/link_sf"/>
</dbReference>
<dbReference type="InterPro" id="IPR050111">
    <property type="entry name" value="C-type_lectin/snaclec_domain"/>
</dbReference>
<dbReference type="InterPro" id="IPR018378">
    <property type="entry name" value="C-type_lectin_CS"/>
</dbReference>
<dbReference type="InterPro" id="IPR016187">
    <property type="entry name" value="CTDL_fold"/>
</dbReference>
<dbReference type="InterPro" id="IPR033816">
    <property type="entry name" value="EMBP_CTLD"/>
</dbReference>
<dbReference type="InterPro" id="IPR002352">
    <property type="entry name" value="Eosinophil_major_basic"/>
</dbReference>
<dbReference type="PANTHER" id="PTHR22803">
    <property type="entry name" value="MANNOSE, PHOSPHOLIPASE, LECTIN RECEPTOR RELATED"/>
    <property type="match status" value="1"/>
</dbReference>
<dbReference type="Pfam" id="PF00059">
    <property type="entry name" value="Lectin_C"/>
    <property type="match status" value="1"/>
</dbReference>
<dbReference type="PRINTS" id="PR00770">
    <property type="entry name" value="EMAJORBASICP"/>
</dbReference>
<dbReference type="SMART" id="SM00034">
    <property type="entry name" value="CLECT"/>
    <property type="match status" value="1"/>
</dbReference>
<dbReference type="SUPFAM" id="SSF56436">
    <property type="entry name" value="C-type lectin-like"/>
    <property type="match status" value="1"/>
</dbReference>
<dbReference type="PROSITE" id="PS00615">
    <property type="entry name" value="C_TYPE_LECTIN_1"/>
    <property type="match status" value="1"/>
</dbReference>
<dbReference type="PROSITE" id="PS50041">
    <property type="entry name" value="C_TYPE_LECTIN_2"/>
    <property type="match status" value="1"/>
</dbReference>
<organism>
    <name type="scientific">Cavia porcellus</name>
    <name type="common">Guinea pig</name>
    <dbReference type="NCBI Taxonomy" id="10141"/>
    <lineage>
        <taxon>Eukaryota</taxon>
        <taxon>Metazoa</taxon>
        <taxon>Chordata</taxon>
        <taxon>Craniata</taxon>
        <taxon>Vertebrata</taxon>
        <taxon>Euteleostomi</taxon>
        <taxon>Mammalia</taxon>
        <taxon>Eutheria</taxon>
        <taxon>Euarchontoglires</taxon>
        <taxon>Glires</taxon>
        <taxon>Rodentia</taxon>
        <taxon>Hystricomorpha</taxon>
        <taxon>Caviidae</taxon>
        <taxon>Cavia</taxon>
    </lineage>
</organism>